<accession>P0A4A4</accession>
<accession>P97222</accession>
<reference key="1">
    <citation type="submission" date="2001-04" db="EMBL/GenBank/DDBJ databases">
        <title>Genetic analysis of Streptomyces avermitilis mutants.</title>
        <authorList>
            <person name="Rozhonova I."/>
            <person name="Kopecky J."/>
        </authorList>
    </citation>
    <scope>NUCLEOTIDE SEQUENCE [GENOMIC DNA]</scope>
    <source>
        <strain>ATCC 31267 / DSM 46492 / JCM 5070 / NBRC 14893 / NCIMB 12804 / NRRL 8165 / MA-4680</strain>
    </source>
</reference>
<reference key="2">
    <citation type="journal article" date="2001" name="Proc. Natl. Acad. Sci. U.S.A.">
        <title>Genome sequence of an industrial microorganism Streptomyces avermitilis: deducing the ability of producing secondary metabolites.</title>
        <authorList>
            <person name="Omura S."/>
            <person name="Ikeda H."/>
            <person name="Ishikawa J."/>
            <person name="Hanamoto A."/>
            <person name="Takahashi C."/>
            <person name="Shinose M."/>
            <person name="Takahashi Y."/>
            <person name="Horikawa H."/>
            <person name="Nakazawa H."/>
            <person name="Osonoe T."/>
            <person name="Kikuchi H."/>
            <person name="Shiba T."/>
            <person name="Sakaki Y."/>
            <person name="Hattori M."/>
        </authorList>
    </citation>
    <scope>NUCLEOTIDE SEQUENCE [LARGE SCALE GENOMIC DNA]</scope>
    <source>
        <strain>ATCC 31267 / DSM 46492 / JCM 5070 / NBRC 14893 / NCIMB 12804 / NRRL 8165 / MA-4680</strain>
    </source>
</reference>
<reference key="3">
    <citation type="journal article" date="2003" name="Nat. Biotechnol.">
        <title>Complete genome sequence and comparative analysis of the industrial microorganism Streptomyces avermitilis.</title>
        <authorList>
            <person name="Ikeda H."/>
            <person name="Ishikawa J."/>
            <person name="Hanamoto A."/>
            <person name="Shinose M."/>
            <person name="Kikuchi H."/>
            <person name="Shiba T."/>
            <person name="Sakaki Y."/>
            <person name="Hattori M."/>
            <person name="Omura S."/>
        </authorList>
    </citation>
    <scope>NUCLEOTIDE SEQUENCE [LARGE SCALE GENOMIC DNA]</scope>
    <source>
        <strain>ATCC 31267 / DSM 46492 / JCM 5070 / NBRC 14893 / NCIMB 12804 / NRRL 8165 / MA-4680</strain>
    </source>
</reference>
<feature type="chain" id="PRO_0000146319" description="Small ribosomal subunit protein uS12">
    <location>
        <begin position="1"/>
        <end position="123"/>
    </location>
</feature>
<feature type="region of interest" description="Disordered" evidence="2">
    <location>
        <begin position="1"/>
        <end position="30"/>
    </location>
</feature>
<feature type="compositionally biased region" description="Basic and acidic residues" evidence="2">
    <location>
        <begin position="11"/>
        <end position="20"/>
    </location>
</feature>
<feature type="modified residue" description="3-methylthioaspartic acid" evidence="1">
    <location>
        <position position="89"/>
    </location>
</feature>
<evidence type="ECO:0000250" key="1"/>
<evidence type="ECO:0000256" key="2">
    <source>
        <dbReference type="SAM" id="MobiDB-lite"/>
    </source>
</evidence>
<evidence type="ECO:0000305" key="3"/>
<keyword id="KW-0046">Antibiotic resistance</keyword>
<keyword id="KW-0488">Methylation</keyword>
<keyword id="KW-1185">Reference proteome</keyword>
<keyword id="KW-0687">Ribonucleoprotein</keyword>
<keyword id="KW-0689">Ribosomal protein</keyword>
<keyword id="KW-0694">RNA-binding</keyword>
<keyword id="KW-0699">rRNA-binding</keyword>
<keyword id="KW-0820">tRNA-binding</keyword>
<comment type="function">
    <text evidence="1">With S4 and S5 plays an important role in translational accuracy.</text>
</comment>
<comment type="function">
    <text evidence="1">Interacts with and stabilizes bases of the 16S rRNA that are involved in tRNA selection in the A site and with the mRNA backbone. Located at the interface of the 30S and 50S subunits, it traverses the body of the 30S subunit contacting proteins on the other side and probably holding the rRNA structure together. The combined cluster of proteins S8, S12 and S17 appears to hold together the shoulder and platform of the 30S subunit (By similarity).</text>
</comment>
<comment type="subunit">
    <text evidence="1">Part of the 30S ribosomal subunit. Contacts proteins S8 and S17. May interact with IF1 in the 30S initiation complex (By similarity).</text>
</comment>
<comment type="biotechnology">
    <text>One streptomycin resistant strain of S.coelicolor and S.lividans (K88E) produces increased quantities of the natural antibiotic actinorhodin; strains which are resistant to multiple drugs produce more antibiotic.</text>
</comment>
<comment type="similarity">
    <text evidence="3">Belongs to the universal ribosomal protein uS12 family.</text>
</comment>
<protein>
    <recommendedName>
        <fullName evidence="3">Small ribosomal subunit protein uS12</fullName>
    </recommendedName>
    <alternativeName>
        <fullName>30S ribosomal protein S12</fullName>
    </alternativeName>
</protein>
<organism>
    <name type="scientific">Streptomyces avermitilis (strain ATCC 31267 / DSM 46492 / JCM 5070 / NBRC 14893 / NCIMB 12804 / NRRL 8165 / MA-4680)</name>
    <dbReference type="NCBI Taxonomy" id="227882"/>
    <lineage>
        <taxon>Bacteria</taxon>
        <taxon>Bacillati</taxon>
        <taxon>Actinomycetota</taxon>
        <taxon>Actinomycetes</taxon>
        <taxon>Kitasatosporales</taxon>
        <taxon>Streptomycetaceae</taxon>
        <taxon>Streptomyces</taxon>
    </lineage>
</organism>
<gene>
    <name type="primary">rpsL</name>
    <name type="ordered locus">SAV_4917</name>
</gene>
<dbReference type="EMBL" id="AY029771">
    <property type="protein sequence ID" value="AAK49775.1"/>
    <property type="molecule type" value="Genomic_DNA"/>
</dbReference>
<dbReference type="EMBL" id="BA000030">
    <property type="protein sequence ID" value="BAC72629.1"/>
    <property type="molecule type" value="Genomic_DNA"/>
</dbReference>
<dbReference type="RefSeq" id="WP_003948652.1">
    <property type="nucleotide sequence ID" value="NZ_JZJK01000077.1"/>
</dbReference>
<dbReference type="SMR" id="P0A4A4"/>
<dbReference type="GeneID" id="97760361"/>
<dbReference type="KEGG" id="sma:SAVERM_4917"/>
<dbReference type="eggNOG" id="COG0048">
    <property type="taxonomic scope" value="Bacteria"/>
</dbReference>
<dbReference type="HOGENOM" id="CLU_104295_1_2_11"/>
<dbReference type="OrthoDB" id="9802366at2"/>
<dbReference type="Proteomes" id="UP000000428">
    <property type="component" value="Chromosome"/>
</dbReference>
<dbReference type="GO" id="GO:0015935">
    <property type="term" value="C:small ribosomal subunit"/>
    <property type="evidence" value="ECO:0007669"/>
    <property type="project" value="InterPro"/>
</dbReference>
<dbReference type="GO" id="GO:0019843">
    <property type="term" value="F:rRNA binding"/>
    <property type="evidence" value="ECO:0007669"/>
    <property type="project" value="UniProtKB-UniRule"/>
</dbReference>
<dbReference type="GO" id="GO:0003735">
    <property type="term" value="F:structural constituent of ribosome"/>
    <property type="evidence" value="ECO:0007669"/>
    <property type="project" value="InterPro"/>
</dbReference>
<dbReference type="GO" id="GO:0000049">
    <property type="term" value="F:tRNA binding"/>
    <property type="evidence" value="ECO:0007669"/>
    <property type="project" value="UniProtKB-UniRule"/>
</dbReference>
<dbReference type="GO" id="GO:0046677">
    <property type="term" value="P:response to antibiotic"/>
    <property type="evidence" value="ECO:0007669"/>
    <property type="project" value="UniProtKB-KW"/>
</dbReference>
<dbReference type="GO" id="GO:0006412">
    <property type="term" value="P:translation"/>
    <property type="evidence" value="ECO:0007669"/>
    <property type="project" value="UniProtKB-UniRule"/>
</dbReference>
<dbReference type="CDD" id="cd03368">
    <property type="entry name" value="Ribosomal_S12"/>
    <property type="match status" value="1"/>
</dbReference>
<dbReference type="FunFam" id="2.40.50.140:FF:000001">
    <property type="entry name" value="30S ribosomal protein S12"/>
    <property type="match status" value="1"/>
</dbReference>
<dbReference type="Gene3D" id="2.40.50.140">
    <property type="entry name" value="Nucleic acid-binding proteins"/>
    <property type="match status" value="1"/>
</dbReference>
<dbReference type="HAMAP" id="MF_00403_B">
    <property type="entry name" value="Ribosomal_uS12_B"/>
    <property type="match status" value="1"/>
</dbReference>
<dbReference type="InterPro" id="IPR012340">
    <property type="entry name" value="NA-bd_OB-fold"/>
</dbReference>
<dbReference type="InterPro" id="IPR006032">
    <property type="entry name" value="Ribosomal_uS12"/>
</dbReference>
<dbReference type="InterPro" id="IPR005679">
    <property type="entry name" value="Ribosomal_uS12_bac"/>
</dbReference>
<dbReference type="NCBIfam" id="TIGR00981">
    <property type="entry name" value="rpsL_bact"/>
    <property type="match status" value="1"/>
</dbReference>
<dbReference type="PANTHER" id="PTHR11652">
    <property type="entry name" value="30S RIBOSOMAL PROTEIN S12 FAMILY MEMBER"/>
    <property type="match status" value="1"/>
</dbReference>
<dbReference type="Pfam" id="PF00164">
    <property type="entry name" value="Ribosom_S12_S23"/>
    <property type="match status" value="1"/>
</dbReference>
<dbReference type="PIRSF" id="PIRSF002133">
    <property type="entry name" value="Ribosomal_S12/S23"/>
    <property type="match status" value="1"/>
</dbReference>
<dbReference type="PRINTS" id="PR01034">
    <property type="entry name" value="RIBOSOMALS12"/>
</dbReference>
<dbReference type="SUPFAM" id="SSF50249">
    <property type="entry name" value="Nucleic acid-binding proteins"/>
    <property type="match status" value="1"/>
</dbReference>
<dbReference type="PROSITE" id="PS00055">
    <property type="entry name" value="RIBOSOMAL_S12"/>
    <property type="match status" value="1"/>
</dbReference>
<proteinExistence type="evidence at protein level"/>
<sequence>MPTIQQLVRKGRQDKVEKNKTPALEGSPQRRGVCTRVFTTTPKKPNSALRKVARVRLTSGIEVTAYIPGEGHNLQEHSIVLVRGGRVKDLPGVRYKIIRGSLDTQGVKNRKQARSRYGAKKEK</sequence>
<name>RS12_STRAW</name>